<accession>C6DI80</accession>
<name>ARGB_PECCP</name>
<comment type="function">
    <text evidence="1">Catalyzes the ATP-dependent phosphorylation of N-acetyl-L-glutamate.</text>
</comment>
<comment type="catalytic activity">
    <reaction evidence="1">
        <text>N-acetyl-L-glutamate + ATP = N-acetyl-L-glutamyl 5-phosphate + ADP</text>
        <dbReference type="Rhea" id="RHEA:14629"/>
        <dbReference type="ChEBI" id="CHEBI:30616"/>
        <dbReference type="ChEBI" id="CHEBI:44337"/>
        <dbReference type="ChEBI" id="CHEBI:57936"/>
        <dbReference type="ChEBI" id="CHEBI:456216"/>
        <dbReference type="EC" id="2.7.2.8"/>
    </reaction>
</comment>
<comment type="pathway">
    <text evidence="1">Amino-acid biosynthesis; L-arginine biosynthesis; N(2)-acetyl-L-ornithine from L-glutamate: step 2/4.</text>
</comment>
<comment type="subunit">
    <text evidence="1">Homodimer.</text>
</comment>
<comment type="subcellular location">
    <subcellularLocation>
        <location evidence="1">Cytoplasm</location>
    </subcellularLocation>
</comment>
<comment type="similarity">
    <text evidence="1">Belongs to the acetylglutamate kinase family. ArgB subfamily.</text>
</comment>
<reference key="1">
    <citation type="submission" date="2009-07" db="EMBL/GenBank/DDBJ databases">
        <title>Complete sequence of Pectobacterium carotovorum subsp. carotovorum PC1.</title>
        <authorList>
            <consortium name="US DOE Joint Genome Institute"/>
            <person name="Lucas S."/>
            <person name="Copeland A."/>
            <person name="Lapidus A."/>
            <person name="Glavina del Rio T."/>
            <person name="Tice H."/>
            <person name="Bruce D."/>
            <person name="Goodwin L."/>
            <person name="Pitluck S."/>
            <person name="Munk A.C."/>
            <person name="Brettin T."/>
            <person name="Detter J.C."/>
            <person name="Han C."/>
            <person name="Tapia R."/>
            <person name="Larimer F."/>
            <person name="Land M."/>
            <person name="Hauser L."/>
            <person name="Kyrpides N."/>
            <person name="Mikhailova N."/>
            <person name="Balakrishnan V."/>
            <person name="Glasner J."/>
            <person name="Perna N.T."/>
        </authorList>
    </citation>
    <scope>NUCLEOTIDE SEQUENCE [LARGE SCALE GENOMIC DNA]</scope>
    <source>
        <strain>PC1</strain>
    </source>
</reference>
<gene>
    <name evidence="1" type="primary">argB</name>
    <name type="ordered locus">PC1_4059</name>
</gene>
<sequence>MNPLIIKLGGVLLDSEEALERLFTALVAYRQEHQRPLVIVHGGGCLVDDLMKKLSLPVVKKNGLRVTPADQIDIITGALAGSANKTLLSWAKKHDINAVGLCLGDGGSTTVTQLDEALGFVGKAEAGSPALLNTLLSAGYLPVVSSIGITAQGDLMNVNADQAATALAQTLGADLILLSDVSGILDGKGQRIAEMTAEKAEQLIAQGIITDGMIVKVNAALDAARALGRPVDIASWRHAEQLPALFNGVAIGTRILA</sequence>
<protein>
    <recommendedName>
        <fullName evidence="1">Acetylglutamate kinase</fullName>
        <ecNumber evidence="1">2.7.2.8</ecNumber>
    </recommendedName>
    <alternativeName>
        <fullName evidence="1">N-acetyl-L-glutamate 5-phosphotransferase</fullName>
    </alternativeName>
    <alternativeName>
        <fullName evidence="1">NAG kinase</fullName>
        <shortName evidence="1">NAGK</shortName>
    </alternativeName>
</protein>
<organism>
    <name type="scientific">Pectobacterium carotovorum subsp. carotovorum (strain PC1)</name>
    <dbReference type="NCBI Taxonomy" id="561230"/>
    <lineage>
        <taxon>Bacteria</taxon>
        <taxon>Pseudomonadati</taxon>
        <taxon>Pseudomonadota</taxon>
        <taxon>Gammaproteobacteria</taxon>
        <taxon>Enterobacterales</taxon>
        <taxon>Pectobacteriaceae</taxon>
        <taxon>Pectobacterium</taxon>
    </lineage>
</organism>
<dbReference type="EC" id="2.7.2.8" evidence="1"/>
<dbReference type="EMBL" id="CP001657">
    <property type="protein sequence ID" value="ACT15074.1"/>
    <property type="molecule type" value="Genomic_DNA"/>
</dbReference>
<dbReference type="RefSeq" id="WP_015842151.1">
    <property type="nucleotide sequence ID" value="NC_012917.1"/>
</dbReference>
<dbReference type="SMR" id="C6DI80"/>
<dbReference type="STRING" id="561230.PC1_4059"/>
<dbReference type="GeneID" id="67796038"/>
<dbReference type="KEGG" id="pct:PC1_4059"/>
<dbReference type="eggNOG" id="COG0548">
    <property type="taxonomic scope" value="Bacteria"/>
</dbReference>
<dbReference type="HOGENOM" id="CLU_053680_1_1_6"/>
<dbReference type="OrthoDB" id="5915023at2"/>
<dbReference type="UniPathway" id="UPA00068">
    <property type="reaction ID" value="UER00107"/>
</dbReference>
<dbReference type="Proteomes" id="UP000002736">
    <property type="component" value="Chromosome"/>
</dbReference>
<dbReference type="GO" id="GO:0005737">
    <property type="term" value="C:cytoplasm"/>
    <property type="evidence" value="ECO:0007669"/>
    <property type="project" value="UniProtKB-SubCell"/>
</dbReference>
<dbReference type="GO" id="GO:0003991">
    <property type="term" value="F:acetylglutamate kinase activity"/>
    <property type="evidence" value="ECO:0007669"/>
    <property type="project" value="UniProtKB-UniRule"/>
</dbReference>
<dbReference type="GO" id="GO:0005524">
    <property type="term" value="F:ATP binding"/>
    <property type="evidence" value="ECO:0007669"/>
    <property type="project" value="UniProtKB-UniRule"/>
</dbReference>
<dbReference type="GO" id="GO:0042450">
    <property type="term" value="P:arginine biosynthetic process via ornithine"/>
    <property type="evidence" value="ECO:0007669"/>
    <property type="project" value="UniProtKB-UniRule"/>
</dbReference>
<dbReference type="GO" id="GO:0006526">
    <property type="term" value="P:L-arginine biosynthetic process"/>
    <property type="evidence" value="ECO:0007669"/>
    <property type="project" value="UniProtKB-UniPathway"/>
</dbReference>
<dbReference type="CDD" id="cd04249">
    <property type="entry name" value="AAK_NAGK-NC"/>
    <property type="match status" value="1"/>
</dbReference>
<dbReference type="FunFam" id="3.40.1160.10:FF:000008">
    <property type="entry name" value="Acetylglutamate kinase"/>
    <property type="match status" value="1"/>
</dbReference>
<dbReference type="Gene3D" id="3.40.1160.10">
    <property type="entry name" value="Acetylglutamate kinase-like"/>
    <property type="match status" value="1"/>
</dbReference>
<dbReference type="HAMAP" id="MF_00082">
    <property type="entry name" value="ArgB"/>
    <property type="match status" value="1"/>
</dbReference>
<dbReference type="InterPro" id="IPR036393">
    <property type="entry name" value="AceGlu_kinase-like_sf"/>
</dbReference>
<dbReference type="InterPro" id="IPR004662">
    <property type="entry name" value="AcgluKinase_fam"/>
</dbReference>
<dbReference type="InterPro" id="IPR037528">
    <property type="entry name" value="ArgB"/>
</dbReference>
<dbReference type="InterPro" id="IPR001048">
    <property type="entry name" value="Asp/Glu/Uridylate_kinase"/>
</dbReference>
<dbReference type="InterPro" id="IPR041731">
    <property type="entry name" value="NAGK-NC"/>
</dbReference>
<dbReference type="NCBIfam" id="TIGR00761">
    <property type="entry name" value="argB"/>
    <property type="match status" value="1"/>
</dbReference>
<dbReference type="PANTHER" id="PTHR23342">
    <property type="entry name" value="N-ACETYLGLUTAMATE SYNTHASE"/>
    <property type="match status" value="1"/>
</dbReference>
<dbReference type="PANTHER" id="PTHR23342:SF0">
    <property type="entry name" value="N-ACETYLGLUTAMATE SYNTHASE, MITOCHONDRIAL"/>
    <property type="match status" value="1"/>
</dbReference>
<dbReference type="Pfam" id="PF00696">
    <property type="entry name" value="AA_kinase"/>
    <property type="match status" value="1"/>
</dbReference>
<dbReference type="PIRSF" id="PIRSF000728">
    <property type="entry name" value="NAGK"/>
    <property type="match status" value="1"/>
</dbReference>
<dbReference type="SUPFAM" id="SSF53633">
    <property type="entry name" value="Carbamate kinase-like"/>
    <property type="match status" value="1"/>
</dbReference>
<feature type="chain" id="PRO_1000202566" description="Acetylglutamate kinase">
    <location>
        <begin position="1"/>
        <end position="257"/>
    </location>
</feature>
<feature type="binding site" evidence="1">
    <location>
        <begin position="43"/>
        <end position="44"/>
    </location>
    <ligand>
        <name>substrate</name>
    </ligand>
</feature>
<feature type="binding site" evidence="1">
    <location>
        <position position="65"/>
    </location>
    <ligand>
        <name>substrate</name>
    </ligand>
</feature>
<feature type="binding site" evidence="1">
    <location>
        <position position="157"/>
    </location>
    <ligand>
        <name>substrate</name>
    </ligand>
</feature>
<feature type="binding site" evidence="1">
    <location>
        <begin position="180"/>
        <end position="185"/>
    </location>
    <ligand>
        <name>ATP</name>
        <dbReference type="ChEBI" id="CHEBI:30616"/>
    </ligand>
</feature>
<feature type="binding site" evidence="1">
    <location>
        <begin position="208"/>
        <end position="210"/>
    </location>
    <ligand>
        <name>ATP</name>
        <dbReference type="ChEBI" id="CHEBI:30616"/>
    </ligand>
</feature>
<feature type="site" description="Transition state stabilizer" evidence="1">
    <location>
        <position position="7"/>
    </location>
</feature>
<feature type="site" description="Transition state stabilizer" evidence="1">
    <location>
        <position position="216"/>
    </location>
</feature>
<keyword id="KW-0028">Amino-acid biosynthesis</keyword>
<keyword id="KW-0055">Arginine biosynthesis</keyword>
<keyword id="KW-0067">ATP-binding</keyword>
<keyword id="KW-0963">Cytoplasm</keyword>
<keyword id="KW-0418">Kinase</keyword>
<keyword id="KW-0547">Nucleotide-binding</keyword>
<keyword id="KW-0808">Transferase</keyword>
<proteinExistence type="inferred from homology"/>
<evidence type="ECO:0000255" key="1">
    <source>
        <dbReference type="HAMAP-Rule" id="MF_00082"/>
    </source>
</evidence>